<protein>
    <recommendedName>
        <fullName evidence="1">Tryptophan synthase alpha chain</fullName>
        <ecNumber evidence="1">4.2.1.20</ecNumber>
    </recommendedName>
</protein>
<dbReference type="EC" id="4.2.1.20" evidence="1"/>
<dbReference type="EMBL" id="CP000941">
    <property type="protein sequence ID" value="ACA11723.1"/>
    <property type="molecule type" value="Genomic_DNA"/>
</dbReference>
<dbReference type="RefSeq" id="WP_004083823.1">
    <property type="nucleotide sequence ID" value="NC_010513.1"/>
</dbReference>
<dbReference type="SMR" id="B0U6K7"/>
<dbReference type="KEGG" id="xfm:Xfasm12_0729"/>
<dbReference type="HOGENOM" id="CLU_016734_0_0_6"/>
<dbReference type="UniPathway" id="UPA00035">
    <property type="reaction ID" value="UER00044"/>
</dbReference>
<dbReference type="GO" id="GO:0005829">
    <property type="term" value="C:cytosol"/>
    <property type="evidence" value="ECO:0007669"/>
    <property type="project" value="TreeGrafter"/>
</dbReference>
<dbReference type="GO" id="GO:0004834">
    <property type="term" value="F:tryptophan synthase activity"/>
    <property type="evidence" value="ECO:0007669"/>
    <property type="project" value="UniProtKB-UniRule"/>
</dbReference>
<dbReference type="CDD" id="cd04724">
    <property type="entry name" value="Tryptophan_synthase_alpha"/>
    <property type="match status" value="1"/>
</dbReference>
<dbReference type="FunFam" id="3.20.20.70:FF:000037">
    <property type="entry name" value="Tryptophan synthase alpha chain"/>
    <property type="match status" value="1"/>
</dbReference>
<dbReference type="Gene3D" id="3.20.20.70">
    <property type="entry name" value="Aldolase class I"/>
    <property type="match status" value="1"/>
</dbReference>
<dbReference type="HAMAP" id="MF_00131">
    <property type="entry name" value="Trp_synth_alpha"/>
    <property type="match status" value="1"/>
</dbReference>
<dbReference type="InterPro" id="IPR013785">
    <property type="entry name" value="Aldolase_TIM"/>
</dbReference>
<dbReference type="InterPro" id="IPR011060">
    <property type="entry name" value="RibuloseP-bd_barrel"/>
</dbReference>
<dbReference type="InterPro" id="IPR018204">
    <property type="entry name" value="Trp_synthase_alpha_AS"/>
</dbReference>
<dbReference type="InterPro" id="IPR002028">
    <property type="entry name" value="Trp_synthase_suA"/>
</dbReference>
<dbReference type="NCBIfam" id="TIGR00262">
    <property type="entry name" value="trpA"/>
    <property type="match status" value="1"/>
</dbReference>
<dbReference type="PANTHER" id="PTHR43406:SF1">
    <property type="entry name" value="TRYPTOPHAN SYNTHASE ALPHA CHAIN, CHLOROPLASTIC"/>
    <property type="match status" value="1"/>
</dbReference>
<dbReference type="PANTHER" id="PTHR43406">
    <property type="entry name" value="TRYPTOPHAN SYNTHASE, ALPHA CHAIN"/>
    <property type="match status" value="1"/>
</dbReference>
<dbReference type="Pfam" id="PF00290">
    <property type="entry name" value="Trp_syntA"/>
    <property type="match status" value="1"/>
</dbReference>
<dbReference type="SUPFAM" id="SSF51366">
    <property type="entry name" value="Ribulose-phoshate binding barrel"/>
    <property type="match status" value="1"/>
</dbReference>
<dbReference type="PROSITE" id="PS00167">
    <property type="entry name" value="TRP_SYNTHASE_ALPHA"/>
    <property type="match status" value="1"/>
</dbReference>
<evidence type="ECO:0000255" key="1">
    <source>
        <dbReference type="HAMAP-Rule" id="MF_00131"/>
    </source>
</evidence>
<proteinExistence type="inferred from homology"/>
<reference key="1">
    <citation type="journal article" date="2010" name="J. Bacteriol.">
        <title>Whole genome sequences of two Xylella fastidiosa strains (M12 and M23) causing almond leaf scorch disease in California.</title>
        <authorList>
            <person name="Chen J."/>
            <person name="Xie G."/>
            <person name="Han S."/>
            <person name="Chertkov O."/>
            <person name="Sims D."/>
            <person name="Civerolo E.L."/>
        </authorList>
    </citation>
    <scope>NUCLEOTIDE SEQUENCE [LARGE SCALE GENOMIC DNA]</scope>
    <source>
        <strain>M12</strain>
    </source>
</reference>
<organism>
    <name type="scientific">Xylella fastidiosa (strain M12)</name>
    <dbReference type="NCBI Taxonomy" id="405440"/>
    <lineage>
        <taxon>Bacteria</taxon>
        <taxon>Pseudomonadati</taxon>
        <taxon>Pseudomonadota</taxon>
        <taxon>Gammaproteobacteria</taxon>
        <taxon>Lysobacterales</taxon>
        <taxon>Lysobacteraceae</taxon>
        <taxon>Xylella</taxon>
    </lineage>
</organism>
<name>TRPA_XYLFM</name>
<comment type="function">
    <text evidence="1">The alpha subunit is responsible for the aldol cleavage of indoleglycerol phosphate to indole and glyceraldehyde 3-phosphate.</text>
</comment>
<comment type="catalytic activity">
    <reaction evidence="1">
        <text>(1S,2R)-1-C-(indol-3-yl)glycerol 3-phosphate + L-serine = D-glyceraldehyde 3-phosphate + L-tryptophan + H2O</text>
        <dbReference type="Rhea" id="RHEA:10532"/>
        <dbReference type="ChEBI" id="CHEBI:15377"/>
        <dbReference type="ChEBI" id="CHEBI:33384"/>
        <dbReference type="ChEBI" id="CHEBI:57912"/>
        <dbReference type="ChEBI" id="CHEBI:58866"/>
        <dbReference type="ChEBI" id="CHEBI:59776"/>
        <dbReference type="EC" id="4.2.1.20"/>
    </reaction>
</comment>
<comment type="pathway">
    <text evidence="1">Amino-acid biosynthesis; L-tryptophan biosynthesis; L-tryptophan from chorismate: step 5/5.</text>
</comment>
<comment type="subunit">
    <text evidence="1">Tetramer of two alpha and two beta chains.</text>
</comment>
<comment type="similarity">
    <text evidence="1">Belongs to the TrpA family.</text>
</comment>
<keyword id="KW-0028">Amino-acid biosynthesis</keyword>
<keyword id="KW-0057">Aromatic amino acid biosynthesis</keyword>
<keyword id="KW-0456">Lyase</keyword>
<keyword id="KW-0822">Tryptophan biosynthesis</keyword>
<sequence>MHRIDETFRRLRAQSRKALIPFITAGDPSLEAAVPVMHALVRAGADVIELGVPFSDPMADGPVIQHSSERALQRGVGLAYVLQTVDVFRQSDAVTPVVLMGYLNPLEIYGIARFTQQALASGVDGVLLVDLPPEEADEIRAIFSAAGLALIVLASPTTSASRLATLSGVAQGYLYYVSFAGVTGADRLDAQSAGDRLRGLRAQTQVPVVVGFGIRDAASAVVMAVDADGVVVGSALVTALSDAPDVDTACRRADAFLAPLRQALDAVK</sequence>
<accession>B0U6K7</accession>
<gene>
    <name evidence="1" type="primary">trpA</name>
    <name type="ordered locus">Xfasm12_0729</name>
</gene>
<feature type="chain" id="PRO_1000095764" description="Tryptophan synthase alpha chain">
    <location>
        <begin position="1"/>
        <end position="268"/>
    </location>
</feature>
<feature type="active site" description="Proton acceptor" evidence="1">
    <location>
        <position position="49"/>
    </location>
</feature>
<feature type="active site" description="Proton acceptor" evidence="1">
    <location>
        <position position="60"/>
    </location>
</feature>